<accession>A8GQ13</accession>
<feature type="chain" id="PRO_1000060959" description="Nucleoside triphosphate pyrophosphatase">
    <location>
        <begin position="1"/>
        <end position="201"/>
    </location>
</feature>
<feature type="active site" description="Proton acceptor" evidence="1">
    <location>
        <position position="77"/>
    </location>
</feature>
<evidence type="ECO:0000255" key="1">
    <source>
        <dbReference type="HAMAP-Rule" id="MF_00528"/>
    </source>
</evidence>
<sequence length="201" mass="22200">MKQHRENLPIILASSSPARIELLNRIKIIPSQIIPADIDETPNLRELPAPLAIRLAYEKAIKVASQVEESAIIIAADTVAAVGRRILPKATTYEEVKNCIKMVSGRRHRVYTGLCIIKTENDQLTVKQKIVQTIVKFKKLSDEEINFYCSLDEGRGKAGGCKISGYAEAFISFISGSYSNVMGLPLFETANALTSLGFKVY</sequence>
<reference key="1">
    <citation type="submission" date="2007-09" db="EMBL/GenBank/DDBJ databases">
        <title>Complete genome sequence of Rickettsia akari.</title>
        <authorList>
            <person name="Madan A."/>
            <person name="Fahey J."/>
            <person name="Helton E."/>
            <person name="Ketteman M."/>
            <person name="Madan A."/>
            <person name="Rodrigues S."/>
            <person name="Sanchez A."/>
            <person name="Whiting M."/>
            <person name="Dasch G."/>
            <person name="Eremeeva M."/>
        </authorList>
    </citation>
    <scope>NUCLEOTIDE SEQUENCE [LARGE SCALE GENOMIC DNA]</scope>
    <source>
        <strain>Hartford</strain>
    </source>
</reference>
<proteinExistence type="inferred from homology"/>
<name>NTPP_RICAH</name>
<protein>
    <recommendedName>
        <fullName evidence="1">Nucleoside triphosphate pyrophosphatase</fullName>
        <ecNumber evidence="1">3.6.1.9</ecNumber>
    </recommendedName>
    <alternativeName>
        <fullName evidence="1">Nucleotide pyrophosphatase</fullName>
        <shortName evidence="1">Nucleotide PPase</shortName>
    </alternativeName>
</protein>
<keyword id="KW-0963">Cytoplasm</keyword>
<keyword id="KW-0378">Hydrolase</keyword>
<keyword id="KW-0546">Nucleotide metabolism</keyword>
<gene>
    <name type="ordered locus">A1C_06305</name>
</gene>
<comment type="function">
    <text evidence="1">Nucleoside triphosphate pyrophosphatase. May have a dual role in cell division arrest and in preventing the incorporation of modified nucleotides into cellular nucleic acids.</text>
</comment>
<comment type="catalytic activity">
    <reaction evidence="1">
        <text>a ribonucleoside 5'-triphosphate + H2O = a ribonucleoside 5'-phosphate + diphosphate + H(+)</text>
        <dbReference type="Rhea" id="RHEA:23996"/>
        <dbReference type="ChEBI" id="CHEBI:15377"/>
        <dbReference type="ChEBI" id="CHEBI:15378"/>
        <dbReference type="ChEBI" id="CHEBI:33019"/>
        <dbReference type="ChEBI" id="CHEBI:58043"/>
        <dbReference type="ChEBI" id="CHEBI:61557"/>
        <dbReference type="EC" id="3.6.1.9"/>
    </reaction>
</comment>
<comment type="catalytic activity">
    <reaction evidence="1">
        <text>a 2'-deoxyribonucleoside 5'-triphosphate + H2O = a 2'-deoxyribonucleoside 5'-phosphate + diphosphate + H(+)</text>
        <dbReference type="Rhea" id="RHEA:44644"/>
        <dbReference type="ChEBI" id="CHEBI:15377"/>
        <dbReference type="ChEBI" id="CHEBI:15378"/>
        <dbReference type="ChEBI" id="CHEBI:33019"/>
        <dbReference type="ChEBI" id="CHEBI:61560"/>
        <dbReference type="ChEBI" id="CHEBI:65317"/>
        <dbReference type="EC" id="3.6.1.9"/>
    </reaction>
</comment>
<comment type="cofactor">
    <cofactor evidence="1">
        <name>a divalent metal cation</name>
        <dbReference type="ChEBI" id="CHEBI:60240"/>
    </cofactor>
</comment>
<comment type="subcellular location">
    <subcellularLocation>
        <location evidence="1">Cytoplasm</location>
    </subcellularLocation>
</comment>
<comment type="similarity">
    <text evidence="1">Belongs to the Maf family.</text>
</comment>
<organism>
    <name type="scientific">Rickettsia akari (strain Hartford)</name>
    <dbReference type="NCBI Taxonomy" id="293614"/>
    <lineage>
        <taxon>Bacteria</taxon>
        <taxon>Pseudomonadati</taxon>
        <taxon>Pseudomonadota</taxon>
        <taxon>Alphaproteobacteria</taxon>
        <taxon>Rickettsiales</taxon>
        <taxon>Rickettsiaceae</taxon>
        <taxon>Rickettsieae</taxon>
        <taxon>Rickettsia</taxon>
        <taxon>spotted fever group</taxon>
    </lineage>
</organism>
<dbReference type="EC" id="3.6.1.9" evidence="1"/>
<dbReference type="EMBL" id="CP000847">
    <property type="protein sequence ID" value="ABV75488.1"/>
    <property type="molecule type" value="Genomic_DNA"/>
</dbReference>
<dbReference type="RefSeq" id="WP_012150117.1">
    <property type="nucleotide sequence ID" value="NC_009881.1"/>
</dbReference>
<dbReference type="SMR" id="A8GQ13"/>
<dbReference type="STRING" id="293614.A1C_06305"/>
<dbReference type="KEGG" id="rak:A1C_06305"/>
<dbReference type="eggNOG" id="COG0424">
    <property type="taxonomic scope" value="Bacteria"/>
</dbReference>
<dbReference type="HOGENOM" id="CLU_040416_2_0_5"/>
<dbReference type="Proteomes" id="UP000006830">
    <property type="component" value="Chromosome"/>
</dbReference>
<dbReference type="GO" id="GO:0005737">
    <property type="term" value="C:cytoplasm"/>
    <property type="evidence" value="ECO:0007669"/>
    <property type="project" value="UniProtKB-SubCell"/>
</dbReference>
<dbReference type="GO" id="GO:0047429">
    <property type="term" value="F:nucleoside triphosphate diphosphatase activity"/>
    <property type="evidence" value="ECO:0007669"/>
    <property type="project" value="UniProtKB-EC"/>
</dbReference>
<dbReference type="GO" id="GO:0009117">
    <property type="term" value="P:nucleotide metabolic process"/>
    <property type="evidence" value="ECO:0007669"/>
    <property type="project" value="UniProtKB-KW"/>
</dbReference>
<dbReference type="CDD" id="cd00555">
    <property type="entry name" value="Maf"/>
    <property type="match status" value="1"/>
</dbReference>
<dbReference type="Gene3D" id="3.90.950.10">
    <property type="match status" value="1"/>
</dbReference>
<dbReference type="HAMAP" id="MF_00528">
    <property type="entry name" value="Maf"/>
    <property type="match status" value="1"/>
</dbReference>
<dbReference type="InterPro" id="IPR029001">
    <property type="entry name" value="ITPase-like_fam"/>
</dbReference>
<dbReference type="InterPro" id="IPR003697">
    <property type="entry name" value="Maf-like"/>
</dbReference>
<dbReference type="NCBIfam" id="TIGR00172">
    <property type="entry name" value="maf"/>
    <property type="match status" value="1"/>
</dbReference>
<dbReference type="PANTHER" id="PTHR43213">
    <property type="entry name" value="BIFUNCTIONAL DTTP/UTP PYROPHOSPHATASE/METHYLTRANSFERASE PROTEIN-RELATED"/>
    <property type="match status" value="1"/>
</dbReference>
<dbReference type="PANTHER" id="PTHR43213:SF5">
    <property type="entry name" value="BIFUNCTIONAL DTTP_UTP PYROPHOSPHATASE_METHYLTRANSFERASE PROTEIN-RELATED"/>
    <property type="match status" value="1"/>
</dbReference>
<dbReference type="Pfam" id="PF02545">
    <property type="entry name" value="Maf"/>
    <property type="match status" value="1"/>
</dbReference>
<dbReference type="PIRSF" id="PIRSF006305">
    <property type="entry name" value="Maf"/>
    <property type="match status" value="1"/>
</dbReference>
<dbReference type="SUPFAM" id="SSF52972">
    <property type="entry name" value="ITPase-like"/>
    <property type="match status" value="1"/>
</dbReference>